<comment type="function">
    <text evidence="1">Single strand-specific metallo-endoribonuclease involved in late-stage 70S ribosome quality control and in maturation of the 3' terminus of the 16S rRNA.</text>
</comment>
<comment type="cofactor">
    <cofactor evidence="1">
        <name>Zn(2+)</name>
        <dbReference type="ChEBI" id="CHEBI:29105"/>
    </cofactor>
    <text evidence="1">Binds 1 zinc ion.</text>
</comment>
<comment type="subcellular location">
    <subcellularLocation>
        <location evidence="1">Cytoplasm</location>
    </subcellularLocation>
</comment>
<comment type="similarity">
    <text evidence="1">Belongs to the endoribonuclease YbeY family.</text>
</comment>
<keyword id="KW-0963">Cytoplasm</keyword>
<keyword id="KW-0255">Endonuclease</keyword>
<keyword id="KW-0378">Hydrolase</keyword>
<keyword id="KW-0479">Metal-binding</keyword>
<keyword id="KW-0540">Nuclease</keyword>
<keyword id="KW-1185">Reference proteome</keyword>
<keyword id="KW-0690">Ribosome biogenesis</keyword>
<keyword id="KW-0698">rRNA processing</keyword>
<keyword id="KW-0862">Zinc</keyword>
<name>YBEY_CROS8</name>
<sequence length="155" mass="17518">MSQVILDLQVACEDTTGLPDEAQFQTWLNAVVPQFQEESEVTVRLVDEAESHDLNLTYRGMDKPTNVLSFPFEAPPGIDMPLLGDLIICRQVVEREAREQEKPLEAHWAHMVVHGSLHLLGYDHIEDDEAEEMEGIETEIMLALGFDDPYIAEKA</sequence>
<gene>
    <name evidence="1" type="primary">ybeY</name>
    <name type="ordered locus">ESA_02677</name>
</gene>
<evidence type="ECO:0000255" key="1">
    <source>
        <dbReference type="HAMAP-Rule" id="MF_00009"/>
    </source>
</evidence>
<reference key="1">
    <citation type="journal article" date="2010" name="PLoS ONE">
        <title>Genome sequence of Cronobacter sakazakii BAA-894 and comparative genomic hybridization analysis with other Cronobacter species.</title>
        <authorList>
            <person name="Kucerova E."/>
            <person name="Clifton S.W."/>
            <person name="Xia X.Q."/>
            <person name="Long F."/>
            <person name="Porwollik S."/>
            <person name="Fulton L."/>
            <person name="Fronick C."/>
            <person name="Minx P."/>
            <person name="Kyung K."/>
            <person name="Warren W."/>
            <person name="Fulton R."/>
            <person name="Feng D."/>
            <person name="Wollam A."/>
            <person name="Shah N."/>
            <person name="Bhonagiri V."/>
            <person name="Nash W.E."/>
            <person name="Hallsworth-Pepin K."/>
            <person name="Wilson R.K."/>
            <person name="McClelland M."/>
            <person name="Forsythe S.J."/>
        </authorList>
    </citation>
    <scope>NUCLEOTIDE SEQUENCE [LARGE SCALE GENOMIC DNA]</scope>
    <source>
        <strain>ATCC BAA-894</strain>
    </source>
</reference>
<dbReference type="EC" id="3.1.-.-" evidence="1"/>
<dbReference type="EMBL" id="CP000783">
    <property type="protein sequence ID" value="ABU77910.1"/>
    <property type="molecule type" value="Genomic_DNA"/>
</dbReference>
<dbReference type="RefSeq" id="WP_007900519.1">
    <property type="nucleotide sequence ID" value="NC_009778.1"/>
</dbReference>
<dbReference type="SMR" id="A7MQS7"/>
<dbReference type="GeneID" id="56731471"/>
<dbReference type="KEGG" id="esa:ESA_02677"/>
<dbReference type="HOGENOM" id="CLU_106710_0_1_6"/>
<dbReference type="Proteomes" id="UP000000260">
    <property type="component" value="Chromosome"/>
</dbReference>
<dbReference type="GO" id="GO:0005737">
    <property type="term" value="C:cytoplasm"/>
    <property type="evidence" value="ECO:0007669"/>
    <property type="project" value="UniProtKB-SubCell"/>
</dbReference>
<dbReference type="GO" id="GO:0004222">
    <property type="term" value="F:metalloendopeptidase activity"/>
    <property type="evidence" value="ECO:0007669"/>
    <property type="project" value="InterPro"/>
</dbReference>
<dbReference type="GO" id="GO:0004521">
    <property type="term" value="F:RNA endonuclease activity"/>
    <property type="evidence" value="ECO:0007669"/>
    <property type="project" value="UniProtKB-UniRule"/>
</dbReference>
<dbReference type="GO" id="GO:0008270">
    <property type="term" value="F:zinc ion binding"/>
    <property type="evidence" value="ECO:0007669"/>
    <property type="project" value="UniProtKB-UniRule"/>
</dbReference>
<dbReference type="GO" id="GO:0006364">
    <property type="term" value="P:rRNA processing"/>
    <property type="evidence" value="ECO:0007669"/>
    <property type="project" value="UniProtKB-UniRule"/>
</dbReference>
<dbReference type="Gene3D" id="3.40.390.30">
    <property type="entry name" value="Metalloproteases ('zincins'), catalytic domain"/>
    <property type="match status" value="1"/>
</dbReference>
<dbReference type="HAMAP" id="MF_00009">
    <property type="entry name" value="Endoribonucl_YbeY"/>
    <property type="match status" value="1"/>
</dbReference>
<dbReference type="InterPro" id="IPR023091">
    <property type="entry name" value="MetalPrtase_cat_dom_sf_prd"/>
</dbReference>
<dbReference type="InterPro" id="IPR002036">
    <property type="entry name" value="YbeY"/>
</dbReference>
<dbReference type="InterPro" id="IPR020549">
    <property type="entry name" value="YbeY_CS"/>
</dbReference>
<dbReference type="NCBIfam" id="TIGR00043">
    <property type="entry name" value="rRNA maturation RNase YbeY"/>
    <property type="match status" value="1"/>
</dbReference>
<dbReference type="PANTHER" id="PTHR46986">
    <property type="entry name" value="ENDORIBONUCLEASE YBEY, CHLOROPLASTIC"/>
    <property type="match status" value="1"/>
</dbReference>
<dbReference type="PANTHER" id="PTHR46986:SF1">
    <property type="entry name" value="ENDORIBONUCLEASE YBEY, CHLOROPLASTIC"/>
    <property type="match status" value="1"/>
</dbReference>
<dbReference type="Pfam" id="PF02130">
    <property type="entry name" value="YbeY"/>
    <property type="match status" value="1"/>
</dbReference>
<dbReference type="SUPFAM" id="SSF55486">
    <property type="entry name" value="Metalloproteases ('zincins'), catalytic domain"/>
    <property type="match status" value="1"/>
</dbReference>
<dbReference type="PROSITE" id="PS01306">
    <property type="entry name" value="UPF0054"/>
    <property type="match status" value="1"/>
</dbReference>
<accession>A7MQS7</accession>
<proteinExistence type="inferred from homology"/>
<feature type="chain" id="PRO_1000000720" description="Endoribonuclease YbeY">
    <location>
        <begin position="1"/>
        <end position="155"/>
    </location>
</feature>
<feature type="binding site" evidence="1">
    <location>
        <position position="114"/>
    </location>
    <ligand>
        <name>Zn(2+)</name>
        <dbReference type="ChEBI" id="CHEBI:29105"/>
        <note>catalytic</note>
    </ligand>
</feature>
<feature type="binding site" evidence="1">
    <location>
        <position position="118"/>
    </location>
    <ligand>
        <name>Zn(2+)</name>
        <dbReference type="ChEBI" id="CHEBI:29105"/>
        <note>catalytic</note>
    </ligand>
</feature>
<feature type="binding site" evidence="1">
    <location>
        <position position="124"/>
    </location>
    <ligand>
        <name>Zn(2+)</name>
        <dbReference type="ChEBI" id="CHEBI:29105"/>
        <note>catalytic</note>
    </ligand>
</feature>
<organism>
    <name type="scientific">Cronobacter sakazakii (strain ATCC BAA-894)</name>
    <name type="common">Enterobacter sakazakii</name>
    <dbReference type="NCBI Taxonomy" id="290339"/>
    <lineage>
        <taxon>Bacteria</taxon>
        <taxon>Pseudomonadati</taxon>
        <taxon>Pseudomonadota</taxon>
        <taxon>Gammaproteobacteria</taxon>
        <taxon>Enterobacterales</taxon>
        <taxon>Enterobacteriaceae</taxon>
        <taxon>Cronobacter</taxon>
    </lineage>
</organism>
<protein>
    <recommendedName>
        <fullName evidence="1">Endoribonuclease YbeY</fullName>
        <ecNumber evidence="1">3.1.-.-</ecNumber>
    </recommendedName>
</protein>